<protein>
    <recommendedName>
        <fullName>Forkhead box protein D1</fullName>
    </recommendedName>
    <alternativeName>
        <fullName>Brain factor 2</fullName>
        <shortName>BF-2</shortName>
        <shortName>cBF-2</shortName>
    </alternativeName>
    <alternativeName>
        <fullName>HFH-BF-2</fullName>
    </alternativeName>
    <alternativeName>
        <fullName>T-14-6</fullName>
    </alternativeName>
</protein>
<dbReference type="EMBL" id="U47276">
    <property type="protein sequence ID" value="AAB08467.1"/>
    <property type="molecule type" value="mRNA"/>
</dbReference>
<dbReference type="PIR" id="S71795">
    <property type="entry name" value="S71795"/>
</dbReference>
<dbReference type="SMR" id="Q98937"/>
<dbReference type="PaxDb" id="9031-ENSGALP00000035264"/>
<dbReference type="VEuPathDB" id="HostDB:geneid_396109"/>
<dbReference type="eggNOG" id="KOG2294">
    <property type="taxonomic scope" value="Eukaryota"/>
</dbReference>
<dbReference type="HOGENOM" id="CLU_077699_5_1_1"/>
<dbReference type="InParanoid" id="Q98937"/>
<dbReference type="OrthoDB" id="5402974at2759"/>
<dbReference type="Proteomes" id="UP000000539">
    <property type="component" value="Unassembled WGS sequence"/>
</dbReference>
<dbReference type="GO" id="GO:0005634">
    <property type="term" value="C:nucleus"/>
    <property type="evidence" value="ECO:0007669"/>
    <property type="project" value="UniProtKB-SubCell"/>
</dbReference>
<dbReference type="GO" id="GO:0000981">
    <property type="term" value="F:DNA-binding transcription factor activity, RNA polymerase II-specific"/>
    <property type="evidence" value="ECO:0000318"/>
    <property type="project" value="GO_Central"/>
</dbReference>
<dbReference type="GO" id="GO:0000978">
    <property type="term" value="F:RNA polymerase II cis-regulatory region sequence-specific DNA binding"/>
    <property type="evidence" value="ECO:0000318"/>
    <property type="project" value="GO_Central"/>
</dbReference>
<dbReference type="GO" id="GO:0009653">
    <property type="term" value="P:anatomical structure morphogenesis"/>
    <property type="evidence" value="ECO:0000318"/>
    <property type="project" value="GO_Central"/>
</dbReference>
<dbReference type="GO" id="GO:0030154">
    <property type="term" value="P:cell differentiation"/>
    <property type="evidence" value="ECO:0000318"/>
    <property type="project" value="GO_Central"/>
</dbReference>
<dbReference type="GO" id="GO:0006357">
    <property type="term" value="P:regulation of transcription by RNA polymerase II"/>
    <property type="evidence" value="ECO:0000318"/>
    <property type="project" value="GO_Central"/>
</dbReference>
<dbReference type="CDD" id="cd20046">
    <property type="entry name" value="FH_FOXD1_D2-like"/>
    <property type="match status" value="1"/>
</dbReference>
<dbReference type="FunFam" id="1.10.10.10:FF:000016">
    <property type="entry name" value="Forkhead box protein I1"/>
    <property type="match status" value="1"/>
</dbReference>
<dbReference type="Gene3D" id="1.10.10.10">
    <property type="entry name" value="Winged helix-like DNA-binding domain superfamily/Winged helix DNA-binding domain"/>
    <property type="match status" value="1"/>
</dbReference>
<dbReference type="InterPro" id="IPR001766">
    <property type="entry name" value="Fork_head_dom"/>
</dbReference>
<dbReference type="InterPro" id="IPR050211">
    <property type="entry name" value="FOX_domain-containing"/>
</dbReference>
<dbReference type="InterPro" id="IPR018122">
    <property type="entry name" value="TF_fork_head_CS_1"/>
</dbReference>
<dbReference type="InterPro" id="IPR030456">
    <property type="entry name" value="TF_fork_head_CS_2"/>
</dbReference>
<dbReference type="InterPro" id="IPR036388">
    <property type="entry name" value="WH-like_DNA-bd_sf"/>
</dbReference>
<dbReference type="InterPro" id="IPR036390">
    <property type="entry name" value="WH_DNA-bd_sf"/>
</dbReference>
<dbReference type="PANTHER" id="PTHR11829">
    <property type="entry name" value="FORKHEAD BOX PROTEIN"/>
    <property type="match status" value="1"/>
</dbReference>
<dbReference type="PANTHER" id="PTHR11829:SF361">
    <property type="entry name" value="FORKHEAD BOX PROTEIN D4-LIKE 1"/>
    <property type="match status" value="1"/>
</dbReference>
<dbReference type="Pfam" id="PF00250">
    <property type="entry name" value="Forkhead"/>
    <property type="match status" value="1"/>
</dbReference>
<dbReference type="PRINTS" id="PR00053">
    <property type="entry name" value="FORKHEAD"/>
</dbReference>
<dbReference type="SMART" id="SM00339">
    <property type="entry name" value="FH"/>
    <property type="match status" value="1"/>
</dbReference>
<dbReference type="SUPFAM" id="SSF46785">
    <property type="entry name" value="Winged helix' DNA-binding domain"/>
    <property type="match status" value="1"/>
</dbReference>
<dbReference type="PROSITE" id="PS00657">
    <property type="entry name" value="FORK_HEAD_1"/>
    <property type="match status" value="1"/>
</dbReference>
<dbReference type="PROSITE" id="PS00658">
    <property type="entry name" value="FORK_HEAD_2"/>
    <property type="match status" value="1"/>
</dbReference>
<dbReference type="PROSITE" id="PS50039">
    <property type="entry name" value="FORK_HEAD_3"/>
    <property type="match status" value="1"/>
</dbReference>
<accession>Q98937</accession>
<name>FOXD1_CHICK</name>
<comment type="function">
    <text evidence="3">May determine the nasotemporal axis of the retina, and consequently specify the topographical projection of the retinal ganglion-cell axons to the tectum by controlling expression of their target genes.</text>
</comment>
<comment type="subcellular location">
    <subcellularLocation>
        <location evidence="1">Nucleus</location>
    </subcellularLocation>
</comment>
<comment type="tissue specificity">
    <text evidence="3">Retina.</text>
</comment>
<comment type="developmental stage">
    <text evidence="3">Can be detected in regions including primordial retina and neuroepithelium by embryonic day 2 (E2). At 3 dpc, expressed in the temporal retina and associated pigment epithelium as well as in part of the diencephalon, and at 7 dpc is expressed in retinal ganglion cells. Levels begin to decline from 4 dpc and almost disappear by 10 dpc.</text>
</comment>
<proteinExistence type="evidence at transcript level"/>
<gene>
    <name type="primary">FOXD1</name>
    <name type="synonym">HFHBF2</name>
</gene>
<feature type="chain" id="PRO_0000091814" description="Forkhead box protein D1">
    <location>
        <begin position="1"/>
        <end position="440"/>
    </location>
</feature>
<feature type="DNA-binding region" description="Fork-head" evidence="1">
    <location>
        <begin position="143"/>
        <end position="237"/>
    </location>
</feature>
<feature type="region of interest" description="Disordered" evidence="2">
    <location>
        <begin position="1"/>
        <end position="135"/>
    </location>
</feature>
<feature type="region of interest" description="Disordered" evidence="2">
    <location>
        <begin position="295"/>
        <end position="334"/>
    </location>
</feature>
<feature type="region of interest" description="Disordered" evidence="2">
    <location>
        <begin position="388"/>
        <end position="417"/>
    </location>
</feature>
<feature type="compositionally biased region" description="Low complexity" evidence="2">
    <location>
        <begin position="1"/>
        <end position="14"/>
    </location>
</feature>
<feature type="compositionally biased region" description="Acidic residues" evidence="2">
    <location>
        <begin position="15"/>
        <end position="33"/>
    </location>
</feature>
<feature type="compositionally biased region" description="Acidic residues" evidence="2">
    <location>
        <begin position="47"/>
        <end position="60"/>
    </location>
</feature>
<feature type="compositionally biased region" description="Gly residues" evidence="2">
    <location>
        <begin position="76"/>
        <end position="97"/>
    </location>
</feature>
<feature type="compositionally biased region" description="Low complexity" evidence="2">
    <location>
        <begin position="99"/>
        <end position="111"/>
    </location>
</feature>
<feature type="compositionally biased region" description="Gly residues" evidence="2">
    <location>
        <begin position="112"/>
        <end position="135"/>
    </location>
</feature>
<feature type="compositionally biased region" description="Pro residues" evidence="2">
    <location>
        <begin position="301"/>
        <end position="311"/>
    </location>
</feature>
<feature type="compositionally biased region" description="Pro residues" evidence="2">
    <location>
        <begin position="319"/>
        <end position="329"/>
    </location>
</feature>
<feature type="compositionally biased region" description="Gly residues" evidence="2">
    <location>
        <begin position="388"/>
        <end position="401"/>
    </location>
</feature>
<feature type="compositionally biased region" description="Low complexity" evidence="2">
    <location>
        <begin position="402"/>
        <end position="417"/>
    </location>
</feature>
<organism>
    <name type="scientific">Gallus gallus</name>
    <name type="common">Chicken</name>
    <dbReference type="NCBI Taxonomy" id="9031"/>
    <lineage>
        <taxon>Eukaryota</taxon>
        <taxon>Metazoa</taxon>
        <taxon>Chordata</taxon>
        <taxon>Craniata</taxon>
        <taxon>Vertebrata</taxon>
        <taxon>Euteleostomi</taxon>
        <taxon>Archelosauria</taxon>
        <taxon>Archosauria</taxon>
        <taxon>Dinosauria</taxon>
        <taxon>Saurischia</taxon>
        <taxon>Theropoda</taxon>
        <taxon>Coelurosauria</taxon>
        <taxon>Aves</taxon>
        <taxon>Neognathae</taxon>
        <taxon>Galloanserae</taxon>
        <taxon>Galliformes</taxon>
        <taxon>Phasianidae</taxon>
        <taxon>Phasianinae</taxon>
        <taxon>Gallus</taxon>
    </lineage>
</organism>
<reference key="1">
    <citation type="journal article" date="1996" name="Nature">
        <title>Visual projection map specified by topographic expression of transcription factors in the retina.</title>
        <authorList>
            <person name="Yuasa J."/>
            <person name="Hirano S."/>
            <person name="Yamagata M."/>
            <person name="Noda M."/>
        </authorList>
    </citation>
    <scope>NUCLEOTIDE SEQUENCE [MRNA]</scope>
    <scope>FUNCTION</scope>
    <scope>TISSUE SPECIFICITY</scope>
    <scope>DEVELOPMENTAL STAGE</scope>
    <source>
        <strain>White leghorn</strain>
        <tissue>Retina</tissue>
    </source>
</reference>
<sequence>MTLSSEMSEASALAEETDIDVVGEEDDEEDEEEPQPRHRRRRRSYAEDEEEEEEEEEEDAGDLHDDALLPRSPVRAGGGGGGGGGGGGAGGGDGPGGSRPPSRGGPQKAAAAGGGGAGGGGGGGGGAGGGGGGGGGGKNSLVKPPYSYIALITMAILQSPKKRLTLSEICEFISGRFPYYREKFPAWQNSIRHNLSLNDCFVKIPREPGNPGKGNYWTLDPESADMFDNGSFLRRRKRFKRQQLPAPELLLRAVDPAAFLPQPPPQPPQQPPCAYGPYGCGYGLQLQPYHPHSALFAFHHPSPPPRQPPAAPAGAPAAALPPPPPPPPPPRRRAPLLPAAELARTPFGYPHPLGPALAASLHAAKPGSGAAVARSPFSIESIIGGGPGPGLGAGPAPGAGGSCASQSGAATGLSRSLGSGLAPAAALPAAPGLAARISNC</sequence>
<evidence type="ECO:0000255" key="1">
    <source>
        <dbReference type="PROSITE-ProRule" id="PRU00089"/>
    </source>
</evidence>
<evidence type="ECO:0000256" key="2">
    <source>
        <dbReference type="SAM" id="MobiDB-lite"/>
    </source>
</evidence>
<evidence type="ECO:0000269" key="3">
    <source>
    </source>
</evidence>
<keyword id="KW-0217">Developmental protein</keyword>
<keyword id="KW-0238">DNA-binding</keyword>
<keyword id="KW-0539">Nucleus</keyword>
<keyword id="KW-1185">Reference proteome</keyword>
<keyword id="KW-0804">Transcription</keyword>
<keyword id="KW-0805">Transcription regulation</keyword>